<proteinExistence type="inferred from homology"/>
<comment type="function">
    <text evidence="1">Specifically methylates the pseudouridine at position 1915 (m3Psi1915) in 23S rRNA.</text>
</comment>
<comment type="catalytic activity">
    <reaction evidence="1">
        <text>pseudouridine(1915) in 23S rRNA + S-adenosyl-L-methionine = N(3)-methylpseudouridine(1915) in 23S rRNA + S-adenosyl-L-homocysteine + H(+)</text>
        <dbReference type="Rhea" id="RHEA:42752"/>
        <dbReference type="Rhea" id="RHEA-COMP:10221"/>
        <dbReference type="Rhea" id="RHEA-COMP:10222"/>
        <dbReference type="ChEBI" id="CHEBI:15378"/>
        <dbReference type="ChEBI" id="CHEBI:57856"/>
        <dbReference type="ChEBI" id="CHEBI:59789"/>
        <dbReference type="ChEBI" id="CHEBI:65314"/>
        <dbReference type="ChEBI" id="CHEBI:74486"/>
        <dbReference type="EC" id="2.1.1.177"/>
    </reaction>
</comment>
<comment type="subunit">
    <text evidence="1">Homodimer.</text>
</comment>
<comment type="subcellular location">
    <subcellularLocation>
        <location evidence="1">Cytoplasm</location>
    </subcellularLocation>
</comment>
<comment type="similarity">
    <text evidence="1">Belongs to the RNA methyltransferase RlmH family.</text>
</comment>
<keyword id="KW-0963">Cytoplasm</keyword>
<keyword id="KW-0489">Methyltransferase</keyword>
<keyword id="KW-1185">Reference proteome</keyword>
<keyword id="KW-0698">rRNA processing</keyword>
<keyword id="KW-0949">S-adenosyl-L-methionine</keyword>
<keyword id="KW-0808">Transferase</keyword>
<sequence length="156" mass="17664">MKLQLVAVGTKMPDWVQTGFTDYLRRFPKDMPFELLEIPAGKRGKNADIKRILEREGEQMLAAVGKGNRIVTLDIPGTRWETPHLAQQLERWKQDGRDVSLLIGGPEGLSPECKAAAEQSWSLSPLTLPHPLVRVLVAESLYRAWSITTNHPYHRE</sequence>
<gene>
    <name evidence="1" type="primary">rlmH</name>
    <name type="ordered locus">ECA1304</name>
</gene>
<protein>
    <recommendedName>
        <fullName evidence="1">Ribosomal RNA large subunit methyltransferase H</fullName>
        <ecNumber evidence="1">2.1.1.177</ecNumber>
    </recommendedName>
    <alternativeName>
        <fullName evidence="1">23S rRNA (pseudouridine1915-N3)-methyltransferase</fullName>
    </alternativeName>
    <alternativeName>
        <fullName evidence="1">23S rRNA m3Psi1915 methyltransferase</fullName>
    </alternativeName>
    <alternativeName>
        <fullName evidence="1">rRNA (pseudouridine-N3-)-methyltransferase RlmH</fullName>
    </alternativeName>
</protein>
<name>RLMH_PECAS</name>
<organism>
    <name type="scientific">Pectobacterium atrosepticum (strain SCRI 1043 / ATCC BAA-672)</name>
    <name type="common">Erwinia carotovora subsp. atroseptica</name>
    <dbReference type="NCBI Taxonomy" id="218491"/>
    <lineage>
        <taxon>Bacteria</taxon>
        <taxon>Pseudomonadati</taxon>
        <taxon>Pseudomonadota</taxon>
        <taxon>Gammaproteobacteria</taxon>
        <taxon>Enterobacterales</taxon>
        <taxon>Pectobacteriaceae</taxon>
        <taxon>Pectobacterium</taxon>
    </lineage>
</organism>
<reference key="1">
    <citation type="journal article" date="2004" name="Proc. Natl. Acad. Sci. U.S.A.">
        <title>Genome sequence of the enterobacterial phytopathogen Erwinia carotovora subsp. atroseptica and characterization of virulence factors.</title>
        <authorList>
            <person name="Bell K.S."/>
            <person name="Sebaihia M."/>
            <person name="Pritchard L."/>
            <person name="Holden M.T.G."/>
            <person name="Hyman L.J."/>
            <person name="Holeva M.C."/>
            <person name="Thomson N.R."/>
            <person name="Bentley S.D."/>
            <person name="Churcher L.J.C."/>
            <person name="Mungall K."/>
            <person name="Atkin R."/>
            <person name="Bason N."/>
            <person name="Brooks K."/>
            <person name="Chillingworth T."/>
            <person name="Clark K."/>
            <person name="Doggett J."/>
            <person name="Fraser A."/>
            <person name="Hance Z."/>
            <person name="Hauser H."/>
            <person name="Jagels K."/>
            <person name="Moule S."/>
            <person name="Norbertczak H."/>
            <person name="Ormond D."/>
            <person name="Price C."/>
            <person name="Quail M.A."/>
            <person name="Sanders M."/>
            <person name="Walker D."/>
            <person name="Whitehead S."/>
            <person name="Salmond G.P.C."/>
            <person name="Birch P.R.J."/>
            <person name="Parkhill J."/>
            <person name="Toth I.K."/>
        </authorList>
    </citation>
    <scope>NUCLEOTIDE SEQUENCE [LARGE SCALE GENOMIC DNA]</scope>
    <source>
        <strain>SCRI 1043 / ATCC BAA-672</strain>
    </source>
</reference>
<evidence type="ECO:0000255" key="1">
    <source>
        <dbReference type="HAMAP-Rule" id="MF_00658"/>
    </source>
</evidence>
<feature type="chain" id="PRO_0000198119" description="Ribosomal RNA large subunit methyltransferase H">
    <location>
        <begin position="1"/>
        <end position="156"/>
    </location>
</feature>
<feature type="binding site" evidence="1">
    <location>
        <position position="73"/>
    </location>
    <ligand>
        <name>S-adenosyl-L-methionine</name>
        <dbReference type="ChEBI" id="CHEBI:59789"/>
    </ligand>
</feature>
<feature type="binding site" evidence="1">
    <location>
        <position position="104"/>
    </location>
    <ligand>
        <name>S-adenosyl-L-methionine</name>
        <dbReference type="ChEBI" id="CHEBI:59789"/>
    </ligand>
</feature>
<feature type="binding site" evidence="1">
    <location>
        <begin position="123"/>
        <end position="128"/>
    </location>
    <ligand>
        <name>S-adenosyl-L-methionine</name>
        <dbReference type="ChEBI" id="CHEBI:59789"/>
    </ligand>
</feature>
<dbReference type="EC" id="2.1.1.177" evidence="1"/>
<dbReference type="EMBL" id="BX950851">
    <property type="protein sequence ID" value="CAG74214.1"/>
    <property type="molecule type" value="Genomic_DNA"/>
</dbReference>
<dbReference type="RefSeq" id="WP_011092891.1">
    <property type="nucleotide sequence ID" value="NC_004547.2"/>
</dbReference>
<dbReference type="SMR" id="Q6D7M1"/>
<dbReference type="STRING" id="218491.ECA1304"/>
<dbReference type="GeneID" id="57208114"/>
<dbReference type="KEGG" id="eca:ECA1304"/>
<dbReference type="eggNOG" id="COG1576">
    <property type="taxonomic scope" value="Bacteria"/>
</dbReference>
<dbReference type="HOGENOM" id="CLU_100552_1_0_6"/>
<dbReference type="OrthoDB" id="9806643at2"/>
<dbReference type="Proteomes" id="UP000007966">
    <property type="component" value="Chromosome"/>
</dbReference>
<dbReference type="GO" id="GO:0005737">
    <property type="term" value="C:cytoplasm"/>
    <property type="evidence" value="ECO:0007669"/>
    <property type="project" value="UniProtKB-SubCell"/>
</dbReference>
<dbReference type="GO" id="GO:0070038">
    <property type="term" value="F:rRNA (pseudouridine-N3-)-methyltransferase activity"/>
    <property type="evidence" value="ECO:0007669"/>
    <property type="project" value="UniProtKB-UniRule"/>
</dbReference>
<dbReference type="CDD" id="cd18081">
    <property type="entry name" value="RlmH-like"/>
    <property type="match status" value="1"/>
</dbReference>
<dbReference type="FunFam" id="3.40.1280.10:FF:000004">
    <property type="entry name" value="Ribosomal RNA large subunit methyltransferase H"/>
    <property type="match status" value="1"/>
</dbReference>
<dbReference type="Gene3D" id="3.40.1280.10">
    <property type="match status" value="1"/>
</dbReference>
<dbReference type="HAMAP" id="MF_00658">
    <property type="entry name" value="23SrRNA_methyltr_H"/>
    <property type="match status" value="1"/>
</dbReference>
<dbReference type="InterPro" id="IPR029028">
    <property type="entry name" value="Alpha/beta_knot_MTases"/>
</dbReference>
<dbReference type="InterPro" id="IPR003742">
    <property type="entry name" value="RlmH-like"/>
</dbReference>
<dbReference type="InterPro" id="IPR029026">
    <property type="entry name" value="tRNA_m1G_MTases_N"/>
</dbReference>
<dbReference type="NCBIfam" id="NF000984">
    <property type="entry name" value="PRK00103.1-1"/>
    <property type="match status" value="1"/>
</dbReference>
<dbReference type="NCBIfam" id="NF000986">
    <property type="entry name" value="PRK00103.1-4"/>
    <property type="match status" value="1"/>
</dbReference>
<dbReference type="NCBIfam" id="TIGR00246">
    <property type="entry name" value="tRNA_RlmH_YbeA"/>
    <property type="match status" value="1"/>
</dbReference>
<dbReference type="PANTHER" id="PTHR33603">
    <property type="entry name" value="METHYLTRANSFERASE"/>
    <property type="match status" value="1"/>
</dbReference>
<dbReference type="PANTHER" id="PTHR33603:SF1">
    <property type="entry name" value="RIBOSOMAL RNA LARGE SUBUNIT METHYLTRANSFERASE H"/>
    <property type="match status" value="1"/>
</dbReference>
<dbReference type="Pfam" id="PF02590">
    <property type="entry name" value="SPOUT_MTase"/>
    <property type="match status" value="1"/>
</dbReference>
<dbReference type="PIRSF" id="PIRSF004505">
    <property type="entry name" value="MT_bac"/>
    <property type="match status" value="1"/>
</dbReference>
<dbReference type="SUPFAM" id="SSF75217">
    <property type="entry name" value="alpha/beta knot"/>
    <property type="match status" value="1"/>
</dbReference>
<accession>Q6D7M1</accession>